<dbReference type="EC" id="7.1.1.2"/>
<dbReference type="EMBL" id="L06178">
    <property type="protein sequence ID" value="AAB96804.1"/>
    <property type="molecule type" value="Genomic_DNA"/>
</dbReference>
<dbReference type="PIR" id="S52966">
    <property type="entry name" value="S52966"/>
</dbReference>
<dbReference type="RefSeq" id="NP_008088.1">
    <property type="nucleotide sequence ID" value="NC_001566.1"/>
</dbReference>
<dbReference type="SMR" id="P34851"/>
<dbReference type="GeneID" id="807691"/>
<dbReference type="CTD" id="4537"/>
<dbReference type="GO" id="GO:0031966">
    <property type="term" value="C:mitochondrial membrane"/>
    <property type="evidence" value="ECO:0007669"/>
    <property type="project" value="UniProtKB-SubCell"/>
</dbReference>
<dbReference type="GO" id="GO:0030964">
    <property type="term" value="C:NADH dehydrogenase complex"/>
    <property type="evidence" value="ECO:0007669"/>
    <property type="project" value="TreeGrafter"/>
</dbReference>
<dbReference type="GO" id="GO:0008137">
    <property type="term" value="F:NADH dehydrogenase (ubiquinone) activity"/>
    <property type="evidence" value="ECO:0007669"/>
    <property type="project" value="UniProtKB-EC"/>
</dbReference>
<dbReference type="Gene3D" id="1.20.58.1610">
    <property type="entry name" value="NADH:ubiquinone/plastoquinone oxidoreductase, chain 3"/>
    <property type="match status" value="1"/>
</dbReference>
<dbReference type="InterPro" id="IPR000440">
    <property type="entry name" value="NADH_UbQ/plastoQ_OxRdtase_su3"/>
</dbReference>
<dbReference type="InterPro" id="IPR038430">
    <property type="entry name" value="NDAH_ubi_oxred_su3_sf"/>
</dbReference>
<dbReference type="PANTHER" id="PTHR11058">
    <property type="entry name" value="NADH-UBIQUINONE OXIDOREDUCTASE CHAIN 3"/>
    <property type="match status" value="1"/>
</dbReference>
<dbReference type="PANTHER" id="PTHR11058:SF9">
    <property type="entry name" value="NADH-UBIQUINONE OXIDOREDUCTASE CHAIN 3"/>
    <property type="match status" value="1"/>
</dbReference>
<dbReference type="Pfam" id="PF00507">
    <property type="entry name" value="Oxidored_q4"/>
    <property type="match status" value="1"/>
</dbReference>
<gene>
    <name type="primary">ND3</name>
</gene>
<geneLocation type="mitochondrion"/>
<feature type="chain" id="PRO_0000117706" description="NADH-ubiquinone oxidoreductase chain 3">
    <location>
        <begin position="1"/>
        <end position="117"/>
    </location>
</feature>
<feature type="transmembrane region" description="Helical" evidence="2">
    <location>
        <begin position="1"/>
        <end position="21"/>
    </location>
</feature>
<feature type="transmembrane region" description="Helical" evidence="2">
    <location>
        <begin position="58"/>
        <end position="78"/>
    </location>
</feature>
<feature type="transmembrane region" description="Helical" evidence="2">
    <location>
        <begin position="86"/>
        <end position="106"/>
    </location>
</feature>
<protein>
    <recommendedName>
        <fullName>NADH-ubiquinone oxidoreductase chain 3</fullName>
        <ecNumber>7.1.1.2</ecNumber>
    </recommendedName>
    <alternativeName>
        <fullName>NADH dehydrogenase subunit 3</fullName>
    </alternativeName>
</protein>
<accession>P34851</accession>
<evidence type="ECO:0000250" key="1"/>
<evidence type="ECO:0000255" key="2"/>
<evidence type="ECO:0000305" key="3"/>
<reference key="1">
    <citation type="journal article" date="1993" name="Genetics">
        <title>The mitochondrial genome of the honeybee Apis mellifera: complete sequence and genome organization.</title>
        <authorList>
            <person name="Crozier R.H."/>
            <person name="Crozier Y.C."/>
        </authorList>
    </citation>
    <scope>NUCLEOTIDE SEQUENCE [GENOMIC DNA]</scope>
    <source>
        <tissue>Thorax</tissue>
    </source>
</reference>
<organism>
    <name type="scientific">Apis mellifera ligustica</name>
    <name type="common">Common honeybee</name>
    <name type="synonym">Italian honeybee</name>
    <dbReference type="NCBI Taxonomy" id="7469"/>
    <lineage>
        <taxon>Eukaryota</taxon>
        <taxon>Metazoa</taxon>
        <taxon>Ecdysozoa</taxon>
        <taxon>Arthropoda</taxon>
        <taxon>Hexapoda</taxon>
        <taxon>Insecta</taxon>
        <taxon>Pterygota</taxon>
        <taxon>Neoptera</taxon>
        <taxon>Endopterygota</taxon>
        <taxon>Hymenoptera</taxon>
        <taxon>Apocrita</taxon>
        <taxon>Aculeata</taxon>
        <taxon>Apoidea</taxon>
        <taxon>Anthophila</taxon>
        <taxon>Apidae</taxon>
        <taxon>Apis</taxon>
    </lineage>
</organism>
<name>NU3M_APILI</name>
<proteinExistence type="inferred from homology"/>
<keyword id="KW-0249">Electron transport</keyword>
<keyword id="KW-0472">Membrane</keyword>
<keyword id="KW-0496">Mitochondrion</keyword>
<keyword id="KW-0520">NAD</keyword>
<keyword id="KW-0679">Respiratory chain</keyword>
<keyword id="KW-1278">Translocase</keyword>
<keyword id="KW-0812">Transmembrane</keyword>
<keyword id="KW-1133">Transmembrane helix</keyword>
<keyword id="KW-0813">Transport</keyword>
<keyword id="KW-0830">Ubiquinone</keyword>
<comment type="function">
    <text evidence="1">Core subunit of the mitochondrial membrane respiratory chain NADH dehydrogenase (Complex I) that is believed to belong to the minimal assembly required for catalysis. Complex I functions in the transfer of electrons from NADH to the respiratory chain. The immediate electron acceptor for the enzyme is believed to be ubiquinone (By similarity).</text>
</comment>
<comment type="catalytic activity">
    <reaction>
        <text>a ubiquinone + NADH + 5 H(+)(in) = a ubiquinol + NAD(+) + 4 H(+)(out)</text>
        <dbReference type="Rhea" id="RHEA:29091"/>
        <dbReference type="Rhea" id="RHEA-COMP:9565"/>
        <dbReference type="Rhea" id="RHEA-COMP:9566"/>
        <dbReference type="ChEBI" id="CHEBI:15378"/>
        <dbReference type="ChEBI" id="CHEBI:16389"/>
        <dbReference type="ChEBI" id="CHEBI:17976"/>
        <dbReference type="ChEBI" id="CHEBI:57540"/>
        <dbReference type="ChEBI" id="CHEBI:57945"/>
        <dbReference type="EC" id="7.1.1.2"/>
    </reaction>
</comment>
<comment type="subcellular location">
    <subcellularLocation>
        <location evidence="1">Mitochondrion membrane</location>
        <topology evidence="1">Multi-pass membrane protein</topology>
    </subcellularLocation>
</comment>
<comment type="similarity">
    <text evidence="3">Belongs to the complex I subunit 3 family.</text>
</comment>
<sequence>MKFIFMYFIFIILISSILLLLNKFISIYKKKDYEKSSPFECGFNPITKANLPFSLPFFLMTMMFLIFDVEIILFLPIIFYLKSSSTMISYLMISIFLILLITTLILEWMNNYLNWLF</sequence>